<dbReference type="EC" id="3.4.22.29" evidence="2"/>
<dbReference type="EC" id="3.6.1.15" evidence="2"/>
<dbReference type="EC" id="3.4.22.28" evidence="12"/>
<dbReference type="EC" id="2.7.7.48" evidence="10"/>
<dbReference type="EMBL" id="X92886">
    <property type="protein sequence ID" value="CAA63480.1"/>
    <property type="molecule type" value="Genomic_RNA"/>
</dbReference>
<dbReference type="SMR" id="Q66577"/>
<dbReference type="MEROPS" id="C03.011"/>
<dbReference type="Proteomes" id="UP000008271">
    <property type="component" value="Genome"/>
</dbReference>
<dbReference type="GO" id="GO:0044162">
    <property type="term" value="C:host cell cytoplasmic vesicle membrane"/>
    <property type="evidence" value="ECO:0007669"/>
    <property type="project" value="UniProtKB-SubCell"/>
</dbReference>
<dbReference type="GO" id="GO:0042025">
    <property type="term" value="C:host cell nucleus"/>
    <property type="evidence" value="ECO:0007669"/>
    <property type="project" value="UniProtKB-SubCell"/>
</dbReference>
<dbReference type="GO" id="GO:0016020">
    <property type="term" value="C:membrane"/>
    <property type="evidence" value="ECO:0007669"/>
    <property type="project" value="UniProtKB-KW"/>
</dbReference>
<dbReference type="GO" id="GO:0039618">
    <property type="term" value="C:T=pseudo3 icosahedral viral capsid"/>
    <property type="evidence" value="ECO:0007669"/>
    <property type="project" value="UniProtKB-KW"/>
</dbReference>
<dbReference type="GO" id="GO:0005524">
    <property type="term" value="F:ATP binding"/>
    <property type="evidence" value="ECO:0007669"/>
    <property type="project" value="UniProtKB-KW"/>
</dbReference>
<dbReference type="GO" id="GO:0016887">
    <property type="term" value="F:ATP hydrolysis activity"/>
    <property type="evidence" value="ECO:0007669"/>
    <property type="project" value="InterPro"/>
</dbReference>
<dbReference type="GO" id="GO:0015267">
    <property type="term" value="F:channel activity"/>
    <property type="evidence" value="ECO:0007669"/>
    <property type="project" value="UniProtKB-KW"/>
</dbReference>
<dbReference type="GO" id="GO:0004197">
    <property type="term" value="F:cysteine-type endopeptidase activity"/>
    <property type="evidence" value="ECO:0007669"/>
    <property type="project" value="UniProtKB-EC"/>
</dbReference>
<dbReference type="GO" id="GO:0003723">
    <property type="term" value="F:RNA binding"/>
    <property type="evidence" value="ECO:0007669"/>
    <property type="project" value="UniProtKB-KW"/>
</dbReference>
<dbReference type="GO" id="GO:0003724">
    <property type="term" value="F:RNA helicase activity"/>
    <property type="evidence" value="ECO:0007669"/>
    <property type="project" value="InterPro"/>
</dbReference>
<dbReference type="GO" id="GO:0003968">
    <property type="term" value="F:RNA-directed RNA polymerase activity"/>
    <property type="evidence" value="ECO:0007669"/>
    <property type="project" value="UniProtKB-KW"/>
</dbReference>
<dbReference type="GO" id="GO:0005198">
    <property type="term" value="F:structural molecule activity"/>
    <property type="evidence" value="ECO:0007669"/>
    <property type="project" value="InterPro"/>
</dbReference>
<dbReference type="GO" id="GO:0008270">
    <property type="term" value="F:zinc ion binding"/>
    <property type="evidence" value="ECO:0007669"/>
    <property type="project" value="UniProtKB-KW"/>
</dbReference>
<dbReference type="GO" id="GO:0006260">
    <property type="term" value="P:DNA replication"/>
    <property type="evidence" value="ECO:0007669"/>
    <property type="project" value="UniProtKB-KW"/>
</dbReference>
<dbReference type="GO" id="GO:0006351">
    <property type="term" value="P:DNA-templated transcription"/>
    <property type="evidence" value="ECO:0007669"/>
    <property type="project" value="InterPro"/>
</dbReference>
<dbReference type="GO" id="GO:0075509">
    <property type="term" value="P:endocytosis involved in viral entry into host cell"/>
    <property type="evidence" value="ECO:0007669"/>
    <property type="project" value="UniProtKB-KW"/>
</dbReference>
<dbReference type="GO" id="GO:0034220">
    <property type="term" value="P:monoatomic ion transmembrane transport"/>
    <property type="evidence" value="ECO:0007669"/>
    <property type="project" value="UniProtKB-KW"/>
</dbReference>
<dbReference type="GO" id="GO:0006508">
    <property type="term" value="P:proteolysis"/>
    <property type="evidence" value="ECO:0007669"/>
    <property type="project" value="UniProtKB-KW"/>
</dbReference>
<dbReference type="GO" id="GO:0044694">
    <property type="term" value="P:symbiont genome entry into host cell via pore formation in plasma membrane"/>
    <property type="evidence" value="ECO:0007669"/>
    <property type="project" value="UniProtKB-KW"/>
</dbReference>
<dbReference type="GO" id="GO:0039520">
    <property type="term" value="P:symbiont-mediated activation of host autophagy"/>
    <property type="evidence" value="ECO:0000250"/>
    <property type="project" value="UniProtKB"/>
</dbReference>
<dbReference type="GO" id="GO:0039540">
    <property type="term" value="P:symbiont-mediated suppression of host cytoplasmic pattern recognition receptor signaling pathway via inhibition of RIG-I activity"/>
    <property type="evidence" value="ECO:0007669"/>
    <property type="project" value="UniProtKB-KW"/>
</dbReference>
<dbReference type="GO" id="GO:0039522">
    <property type="term" value="P:symbiont-mediated suppression of host mRNA export from nucleus"/>
    <property type="evidence" value="ECO:0007669"/>
    <property type="project" value="UniProtKB-KW"/>
</dbReference>
<dbReference type="GO" id="GO:0039694">
    <property type="term" value="P:viral RNA genome replication"/>
    <property type="evidence" value="ECO:0007669"/>
    <property type="project" value="InterPro"/>
</dbReference>
<dbReference type="GO" id="GO:0019062">
    <property type="term" value="P:virion attachment to host cell"/>
    <property type="evidence" value="ECO:0007669"/>
    <property type="project" value="UniProtKB-KW"/>
</dbReference>
<dbReference type="CDD" id="cd23213">
    <property type="entry name" value="Enterovirus_RdRp"/>
    <property type="match status" value="1"/>
</dbReference>
<dbReference type="CDD" id="cd00205">
    <property type="entry name" value="rhv_like"/>
    <property type="match status" value="3"/>
</dbReference>
<dbReference type="FunFam" id="1.20.960.20:FF:000001">
    <property type="entry name" value="Genome polyprotein"/>
    <property type="match status" value="1"/>
</dbReference>
<dbReference type="FunFam" id="2.40.10.10:FF:000018">
    <property type="entry name" value="Genome polyprotein"/>
    <property type="match status" value="1"/>
</dbReference>
<dbReference type="FunFam" id="2.40.10.10:FF:000020">
    <property type="entry name" value="Genome polyprotein"/>
    <property type="match status" value="1"/>
</dbReference>
<dbReference type="FunFam" id="2.40.10.10:FF:000022">
    <property type="entry name" value="Genome polyprotein"/>
    <property type="match status" value="1"/>
</dbReference>
<dbReference type="FunFam" id="2.60.120.20:FF:000001">
    <property type="entry name" value="Genome polyprotein"/>
    <property type="match status" value="1"/>
</dbReference>
<dbReference type="FunFam" id="2.60.120.20:FF:000002">
    <property type="entry name" value="Genome polyprotein"/>
    <property type="match status" value="1"/>
</dbReference>
<dbReference type="FunFam" id="2.60.120.20:FF:000004">
    <property type="entry name" value="Genome polyprotein"/>
    <property type="match status" value="1"/>
</dbReference>
<dbReference type="FunFam" id="3.30.70.270:FF:000008">
    <property type="entry name" value="Genome polyprotein"/>
    <property type="match status" value="1"/>
</dbReference>
<dbReference type="FunFam" id="4.10.80.10:FF:000001">
    <property type="entry name" value="Genome polyprotein"/>
    <property type="match status" value="1"/>
</dbReference>
<dbReference type="FunFam" id="4.10.880.10:FF:000001">
    <property type="entry name" value="Genome polyprotein"/>
    <property type="match status" value="1"/>
</dbReference>
<dbReference type="FunFam" id="4.10.880.10:FF:000002">
    <property type="entry name" value="Genome polyprotein"/>
    <property type="match status" value="1"/>
</dbReference>
<dbReference type="Gene3D" id="1.20.960.20">
    <property type="match status" value="1"/>
</dbReference>
<dbReference type="Gene3D" id="2.60.120.20">
    <property type="match status" value="3"/>
</dbReference>
<dbReference type="Gene3D" id="3.30.70.270">
    <property type="match status" value="1"/>
</dbReference>
<dbReference type="Gene3D" id="4.10.80.10">
    <property type="entry name" value="Picornavirus coat protein VP4"/>
    <property type="match status" value="1"/>
</dbReference>
<dbReference type="Gene3D" id="6.10.20.20">
    <property type="entry name" value="Poliovirus 3A protein-like"/>
    <property type="match status" value="1"/>
</dbReference>
<dbReference type="Gene3D" id="4.10.880.10">
    <property type="entry name" value="Poliovirus 3D polymerase Domain 1 (Nucleotidyltransferase)"/>
    <property type="match status" value="2"/>
</dbReference>
<dbReference type="Gene3D" id="2.40.10.10">
    <property type="entry name" value="Trypsin-like serine proteases"/>
    <property type="match status" value="4"/>
</dbReference>
<dbReference type="InterPro" id="IPR003593">
    <property type="entry name" value="AAA+_ATPase"/>
</dbReference>
<dbReference type="InterPro" id="IPR043502">
    <property type="entry name" value="DNA/RNA_pol_sf"/>
</dbReference>
<dbReference type="InterPro" id="IPR000605">
    <property type="entry name" value="Helicase_SF3_ssDNA/RNA_vir"/>
</dbReference>
<dbReference type="InterPro" id="IPR014759">
    <property type="entry name" value="Helicase_SF3_ssRNA_vir"/>
</dbReference>
<dbReference type="InterPro" id="IPR027417">
    <property type="entry name" value="P-loop_NTPase"/>
</dbReference>
<dbReference type="InterPro" id="IPR014838">
    <property type="entry name" value="P3A"/>
</dbReference>
<dbReference type="InterPro" id="IPR036203">
    <property type="entry name" value="P3A_soluble_dom"/>
</dbReference>
<dbReference type="InterPro" id="IPR044067">
    <property type="entry name" value="PCV_3C_PRO"/>
</dbReference>
<dbReference type="InterPro" id="IPR000081">
    <property type="entry name" value="Peptidase_C3"/>
</dbReference>
<dbReference type="InterPro" id="IPR000199">
    <property type="entry name" value="Peptidase_C3A/C3B_picornavir"/>
</dbReference>
<dbReference type="InterPro" id="IPR009003">
    <property type="entry name" value="Peptidase_S1_PA"/>
</dbReference>
<dbReference type="InterPro" id="IPR043504">
    <property type="entry name" value="Peptidase_S1_PA_chymotrypsin"/>
</dbReference>
<dbReference type="InterPro" id="IPR003138">
    <property type="entry name" value="Pico_P1A"/>
</dbReference>
<dbReference type="InterPro" id="IPR036988">
    <property type="entry name" value="Pico_P1A_sf"/>
</dbReference>
<dbReference type="InterPro" id="IPR002527">
    <property type="entry name" value="Pico_P2B"/>
</dbReference>
<dbReference type="InterPro" id="IPR001676">
    <property type="entry name" value="Picornavirus_capsid"/>
</dbReference>
<dbReference type="InterPro" id="IPR043128">
    <property type="entry name" value="Rev_trsase/Diguanyl_cyclase"/>
</dbReference>
<dbReference type="InterPro" id="IPR033703">
    <property type="entry name" value="Rhv-like"/>
</dbReference>
<dbReference type="InterPro" id="IPR001205">
    <property type="entry name" value="RNA-dir_pol_C"/>
</dbReference>
<dbReference type="InterPro" id="IPR007094">
    <property type="entry name" value="RNA-dir_pol_PSvirus"/>
</dbReference>
<dbReference type="InterPro" id="IPR029053">
    <property type="entry name" value="Viral_coat"/>
</dbReference>
<dbReference type="Pfam" id="PF08727">
    <property type="entry name" value="P3A"/>
    <property type="match status" value="1"/>
</dbReference>
<dbReference type="Pfam" id="PF00548">
    <property type="entry name" value="Peptidase_C3"/>
    <property type="match status" value="1"/>
</dbReference>
<dbReference type="Pfam" id="PF02226">
    <property type="entry name" value="Pico_P1A"/>
    <property type="match status" value="1"/>
</dbReference>
<dbReference type="Pfam" id="PF00947">
    <property type="entry name" value="Pico_P2A"/>
    <property type="match status" value="1"/>
</dbReference>
<dbReference type="Pfam" id="PF01552">
    <property type="entry name" value="Pico_P2B"/>
    <property type="match status" value="1"/>
</dbReference>
<dbReference type="Pfam" id="PF00680">
    <property type="entry name" value="RdRP_1"/>
    <property type="match status" value="1"/>
</dbReference>
<dbReference type="Pfam" id="PF00073">
    <property type="entry name" value="Rhv"/>
    <property type="match status" value="3"/>
</dbReference>
<dbReference type="Pfam" id="PF00910">
    <property type="entry name" value="RNA_helicase"/>
    <property type="match status" value="1"/>
</dbReference>
<dbReference type="SMART" id="SM00382">
    <property type="entry name" value="AAA"/>
    <property type="match status" value="1"/>
</dbReference>
<dbReference type="SUPFAM" id="SSF56672">
    <property type="entry name" value="DNA/RNA polymerases"/>
    <property type="match status" value="1"/>
</dbReference>
<dbReference type="SUPFAM" id="SSF52540">
    <property type="entry name" value="P-loop containing nucleoside triphosphate hydrolases"/>
    <property type="match status" value="1"/>
</dbReference>
<dbReference type="SUPFAM" id="SSF88633">
    <property type="entry name" value="Positive stranded ssRNA viruses"/>
    <property type="match status" value="2"/>
</dbReference>
<dbReference type="SUPFAM" id="SSF89043">
    <property type="entry name" value="Soluble domain of poliovirus core protein 3a"/>
    <property type="match status" value="1"/>
</dbReference>
<dbReference type="SUPFAM" id="SSF50494">
    <property type="entry name" value="Trypsin-like serine proteases"/>
    <property type="match status" value="2"/>
</dbReference>
<dbReference type="PROSITE" id="PS51874">
    <property type="entry name" value="PCV_3C_PRO"/>
    <property type="match status" value="1"/>
</dbReference>
<dbReference type="PROSITE" id="PS50507">
    <property type="entry name" value="RDRP_SSRNA_POS"/>
    <property type="match status" value="1"/>
</dbReference>
<dbReference type="PROSITE" id="PS51218">
    <property type="entry name" value="SF3_HELICASE_2"/>
    <property type="match status" value="1"/>
</dbReference>
<reference key="1">
    <citation type="journal article" date="1996" name="Virus Genes">
        <title>Molecular cloning and sequence determination of the complete genome of the virulent echovirus 9 strain Barty.</title>
        <authorList>
            <person name="Zimmermann H."/>
            <person name="Eggers H.J."/>
            <person name="Nelsen-Salz B."/>
        </authorList>
    </citation>
    <scope>NUCLEOTIDE SEQUENCE [GENOMIC RNA]</scope>
</reference>
<organism>
    <name type="scientific">Echovirus 9 (strain Barty)</name>
    <dbReference type="NCBI Taxonomy" id="103914"/>
    <lineage>
        <taxon>Viruses</taxon>
        <taxon>Riboviria</taxon>
        <taxon>Orthornavirae</taxon>
        <taxon>Pisuviricota</taxon>
        <taxon>Pisoniviricetes</taxon>
        <taxon>Picornavirales</taxon>
        <taxon>Picornaviridae</taxon>
        <taxon>Ensavirinae</taxon>
        <taxon>Enterovirus</taxon>
        <taxon>Enterovirus B</taxon>
    </lineage>
</organism>
<comment type="function">
    <molecule>Capsid protein VP1</molecule>
    <text evidence="2">Forms an icosahedral capsid of pseudo T=3 symmetry with capsid proteins VP2 and VP3 (By similarity). The capsid is 300 Angstroms in diameter, composed of 60 copies of each capsid protein and enclosing the viral positive strand RNA genome (By similarity). Capsid protein VP1 mainly forms the vertices of the capsid (By similarity). Capsid protein VP1 interacts with host cell receptor to provide virion attachment to target host cells (By similarity). This attachment induces virion internalization (By similarity). Tyrosine kinases are probably involved in the entry process (By similarity). After binding to its receptor, the capsid undergoes conformational changes (By similarity). Capsid protein VP1 N-terminus (that contains an amphipathic alpha-helix) and capsid protein VP4 are externalized (By similarity). Together, they shape a pore in the host membrane through which viral genome is translocated to host cell cytoplasm (By similarity).</text>
</comment>
<comment type="function">
    <molecule>Capsid protein VP2</molecule>
    <text evidence="2">Forms an icosahedral capsid of pseudo T=3 symmetry with capsid proteins VP2 and VP3 (By similarity). The capsid is 300 Angstroms in diameter, composed of 60 copies of each capsid protein and enclosing the viral positive strand RNA genome (By similarity).</text>
</comment>
<comment type="function">
    <molecule>Capsid protein VP3</molecule>
    <text evidence="2">Forms an icosahedral capsid of pseudo T=3 symmetry with capsid proteins VP2 and VP3 (By similarity). The capsid is 300 Angstroms in diameter, composed of 60 copies of each capsid protein and enclosing the viral positive strand RNA genome (By similarity).</text>
</comment>
<comment type="function">
    <molecule>Capsid protein VP4</molecule>
    <text evidence="2">Lies on the inner surface of the capsid shell (By similarity). After binding to the host receptor, the capsid undergoes conformational changes (By similarity). Capsid protein VP4 is released, Capsid protein VP1 N-terminus is externalized, and together, they shape a pore in the host membrane through which the viral genome is translocated into the host cell cytoplasm (By similarity).</text>
</comment>
<comment type="function">
    <molecule>Capsid protein VP0</molecule>
    <text evidence="2">Component of immature procapsids, which is cleaved into capsid proteins VP4 and VP2 after maturation (By similarity). Allows the capsid to remain inactive before the maturation step (By similarity).</text>
</comment>
<comment type="function">
    <molecule>Protease 2A</molecule>
    <text evidence="2 3">Cysteine protease that cleaves viral polyprotein and specific host proteins (By similarity). It is responsible for the autocatalytic cleavage between the P1 and P2 regions, which is the first cleavage occurring in the polyprotein (By similarity). Also cleaves the host translation initiation factor EIF4G1, in order to shut down the capped cellular mRNA translation (By similarity). Inhibits the host nucleus-cytoplasm protein and RNA trafficking by cleaving host members of the nuclear pores (By similarity). Counteracts stress granule formation probably by antagonizing its assembly or promoting its dissassembly (By similarity).</text>
</comment>
<comment type="function">
    <molecule>Protein 2B</molecule>
    <text evidence="2">Plays an essential role in the virus replication cycle by acting as a viroporin. Creates a pore in the host endoplasmic reticulum and as a consequence releases Ca2+ in the cytoplasm of infected cell. In turn, high levels of cytoplasmic calcium may trigger membrane trafficking and transport of viral ER-associated proteins to viroplasms, sites of viral genome replication.</text>
</comment>
<comment type="function">
    <molecule>Protein 2C</molecule>
    <text evidence="2">Induces and associates with structural rearrangements of intracellular membranes. Displays RNA-binding, nucleotide binding and NTPase activities. May play a role in virion morphogenesis and viral RNA encapsidation by interacting with the capsid protein VP3.</text>
</comment>
<comment type="function">
    <molecule>Protein 3AB</molecule>
    <text evidence="2">Localizes the viral replication complex to the surface of membranous vesicles. Together with protein 3CD binds the Cis-Active RNA Element (CRE) which is involved in RNA synthesis initiation. Acts as a cofactor to stimulate the activity of 3D polymerase, maybe through a nucleid acid chaperone activity.</text>
</comment>
<comment type="function">
    <molecule>Protein 3A</molecule>
    <text evidence="2">Localizes the viral replication complex to the surface of membranous vesicles (By similarity). It inhibits host cell endoplasmic reticulum-to-Golgi apparatus transport and causes the disassembly of the Golgi complex, possibly through GBF1 interaction (By similarity). This would result in depletion of MHC, trail receptors and IFN receptors at the host cell surface (By similarity). Plays an essential role in viral RNA replication by recruiting ACBD3 and PI4KB at the viral replication sites, thereby allowing the formation of the rearranged membranous structures where viral replication takes place (By similarity).</text>
</comment>
<comment type="function">
    <molecule>Viral protein genome-linked</molecule>
    <text evidence="2">Acts as a primer for viral RNA replication and remains covalently bound to viral genomic RNA. VPg is uridylylated prior to priming replication into VPg-pUpU. The oriI viral genomic sequence may act as a template for this. The VPg-pUpU is then used as primer on the genomic RNA poly(A) by the RNA-dependent RNA polymerase to replicate the viral genome. During genome replication, the VPg-RNA linkage is removed by the host TDP2, thereby accelerating replication. During the late stage of the replication cycle, host TDP2 is excluded from sites of viral RNA synthesis and encapsidation, allowing for the generation of progeny virions.</text>
</comment>
<comment type="function">
    <molecule>Protein 3CD</molecule>
    <text evidence="2">Involved in the viral replication complex and viral polypeptide maturation. It exhibits protease activity with a specificity and catalytic efficiency that is different from protease 3C. Protein 3CD lacks polymerase activity. Protein 3CD binds to the 5'UTR of the viral genome.</text>
</comment>
<comment type="function">
    <molecule>RNA-directed RNA polymerase</molecule>
    <text evidence="2">Replicates the viral genomic RNA on the surface of intracellular membranes. May form linear arrays of subunits that propagate along a strong head-to-tail interaction called interface-I. Covalently attaches UMP to a tyrosine of VPg, which is used to prime RNA synthesis. The positive stranded RNA genome is first replicated at virus induced membranous vesicles, creating a dsRNA genomic replication form. This dsRNA is then used as template to synthesize positive stranded RNA genomes. ss(+)RNA genomes are either translated, replicated or encapsidated.</text>
</comment>
<comment type="function">
    <molecule>Protease 3C</molecule>
    <text evidence="2 4">Major viral protease that mediates proteolytic processing of the polyprotein (By similarity). Cleaves host EIF5B, contributing to host translation shutoff (By similarity). Also cleaves host PABPC1, contributing to host translation shutoff (By similarity). Cleaves host NLRP1, triggers host N-glycine-mediated degradation of the autoinhibitory NLRP1 N-terminal fragment (By similarity).</text>
</comment>
<comment type="catalytic activity">
    <molecule>Protein 2C</molecule>
    <reaction evidence="2">
        <text>a ribonucleoside 5'-triphosphate + H2O = a ribonucleoside 5'-diphosphate + phosphate + H(+)</text>
        <dbReference type="Rhea" id="RHEA:23680"/>
        <dbReference type="ChEBI" id="CHEBI:15377"/>
        <dbReference type="ChEBI" id="CHEBI:15378"/>
        <dbReference type="ChEBI" id="CHEBI:43474"/>
        <dbReference type="ChEBI" id="CHEBI:57930"/>
        <dbReference type="ChEBI" id="CHEBI:61557"/>
        <dbReference type="EC" id="3.6.1.15"/>
    </reaction>
</comment>
<comment type="catalytic activity">
    <molecule>Protease 2A</molecule>
    <reaction evidence="2">
        <text>Selective cleavage of Tyr-|-Gly bond in the picornavirus polyprotein.</text>
        <dbReference type="EC" id="3.4.22.29"/>
    </reaction>
</comment>
<comment type="catalytic activity">
    <molecule>RNA-directed RNA polymerase</molecule>
    <reaction evidence="10">
        <text>RNA(n) + a ribonucleoside 5'-triphosphate = RNA(n+1) + diphosphate</text>
        <dbReference type="Rhea" id="RHEA:21248"/>
        <dbReference type="Rhea" id="RHEA-COMP:14527"/>
        <dbReference type="Rhea" id="RHEA-COMP:17342"/>
        <dbReference type="ChEBI" id="CHEBI:33019"/>
        <dbReference type="ChEBI" id="CHEBI:61557"/>
        <dbReference type="ChEBI" id="CHEBI:140395"/>
        <dbReference type="EC" id="2.7.7.48"/>
    </reaction>
</comment>
<comment type="catalytic activity">
    <molecule>Protease 3C</molecule>
    <reaction evidence="12">
        <text>Selective cleavage of Gln-|-Gly bond in the poliovirus polyprotein. In other picornavirus reactions Glu may be substituted for Gln, and Ser or Thr for Gly.</text>
        <dbReference type="EC" id="3.4.22.28"/>
    </reaction>
</comment>
<comment type="cofactor">
    <molecule>RNA-directed RNA polymerase</molecule>
    <cofactor evidence="2">
        <name>Mg(2+)</name>
        <dbReference type="ChEBI" id="CHEBI:18420"/>
    </cofactor>
    <text evidence="2 5">Binds 2 magnesium ions that constitute a dinuclear catalytic metal center (By similarity). The magnesium ions are not prebound but only present for catalysis (By similarity). Requires the presence of 3CDpro or 3CPro (By similarity).</text>
</comment>
<comment type="activity regulation">
    <molecule>RNA-directed RNA polymerase</molecule>
    <text evidence="2">Replication or transcription is subject to high level of random mutations by the nucleotide analog ribavirin.</text>
</comment>
<comment type="subunit">
    <molecule>Capsid protein VP0</molecule>
    <text evidence="2">Interacts with capsid protein VP1 and capsid protein VP3 to form heterotrimeric protomers.</text>
</comment>
<comment type="subunit">
    <molecule>Capsid protein VP1</molecule>
    <text evidence="2">Interacts with capsid protein VP0, and capsid protein VP3 to form heterotrimeric protomers (By similarity). Five protomers subsequently associate to form pentamers which serve as building blocks for the capsid (By similarity). Interacts with capsid protein VP2, capsid protein VP3 and capsid protein VP4 following cleavage of capsid protein VP0 (By similarity).</text>
</comment>
<comment type="subunit">
    <molecule>Capsid protein VP2</molecule>
    <text evidence="2">Interacts with capsid protein VP1 and capsid protein VP3 in the mature capsid.</text>
</comment>
<comment type="subunit">
    <molecule>Capsid protein VP3</molecule>
    <text evidence="2">Interacts with capsid protein VP0 and capsid protein VP1 to form heterotrimeric protomers (By similarity). Five protomers subsequently associate to form pentamers which serve as building blocks for the capsid (By similarity). Interacts with capsid protein VP4 in the mature capsid (By similarity). Interacts with protein 2C; this interaction may be important for virion morphogenesis (By similarity).</text>
</comment>
<comment type="subunit">
    <molecule>Capsid protein VP4</molecule>
    <text evidence="2">Interacts with capsid protein VP1 and capsid protein VP3.</text>
</comment>
<comment type="subunit">
    <molecule>Protease 2A</molecule>
    <text evidence="6">Homodimer.</text>
</comment>
<comment type="subunit">
    <molecule>Protein 2C</molecule>
    <text evidence="2">Homohexamer; forms a hexameric ring structure with 6-fold symmetry characteristic of AAA+ ATPases (By similarity). Interacts (via N-terminus) with host RTN3 (via reticulon domain); this interaction is important for viral replication (By similarity). Interacts with capsid protein VP3; this interaction may be important for virion morphogenesis (By similarity).</text>
</comment>
<comment type="subunit">
    <molecule>Protein 3AB</molecule>
    <text evidence="2">Interacts with protein 3CD.</text>
</comment>
<comment type="subunit">
    <molecule>Protein 3A</molecule>
    <text evidence="2">Homodimer (By similarity). Interacts with host GBF1 (By similarity). Interacts (via GOLD domain) with host ACBD3 (via GOLD domain); this interaction allows the formation of a viral protein 3A/ACBD3 heterotetramer with a 2:2 stoichiometry, which will stimulate the recruitment of host PI4KB in order to synthesize PI4P at the viral RNA replication sites (By similarity).</text>
</comment>
<comment type="subunit">
    <molecule>Viral protein genome-linked</molecule>
    <text evidence="2">Interacts with RNA-directed RNA polymerase.</text>
</comment>
<comment type="subunit">
    <molecule>Protein 3CD</molecule>
    <text evidence="2">Interacts with protein 3AB and with RNA-directed RNA polymerase.</text>
</comment>
<comment type="subunit">
    <molecule>RNA-directed RNA polymerase</molecule>
    <text evidence="2">Interacts with Viral protein genome-linked and with protein 3CD.</text>
</comment>
<comment type="subcellular location">
    <molecule>Capsid protein VP0</molecule>
    <subcellularLocation>
        <location>Virion</location>
    </subcellularLocation>
    <subcellularLocation>
        <location evidence="13">Host cytoplasm</location>
    </subcellularLocation>
</comment>
<comment type="subcellular location">
    <molecule>Capsid protein VP4</molecule>
    <subcellularLocation>
        <location>Virion</location>
    </subcellularLocation>
</comment>
<comment type="subcellular location">
    <molecule>Capsid protein VP2</molecule>
    <subcellularLocation>
        <location evidence="2">Virion</location>
    </subcellularLocation>
    <subcellularLocation>
        <location evidence="13">Host cytoplasm</location>
    </subcellularLocation>
</comment>
<comment type="subcellular location">
    <molecule>Capsid protein VP3</molecule>
    <subcellularLocation>
        <location evidence="2">Virion</location>
    </subcellularLocation>
    <subcellularLocation>
        <location evidence="13">Host cytoplasm</location>
    </subcellularLocation>
</comment>
<comment type="subcellular location">
    <molecule>Capsid protein VP1</molecule>
    <subcellularLocation>
        <location evidence="2">Virion</location>
    </subcellularLocation>
    <subcellularLocation>
        <location evidence="13">Host cytoplasm</location>
    </subcellularLocation>
</comment>
<comment type="subcellular location">
    <molecule>Protein 2B</molecule>
    <subcellularLocation>
        <location evidence="13">Host cytoplasmic vesicle membrane</location>
        <topology evidence="13">Peripheral membrane protein</topology>
        <orientation evidence="13">Cytoplasmic side</orientation>
    </subcellularLocation>
    <text>Probably localizes to the surface of intracellular membrane vesicles that are induced after virus infection as the site for viral RNA replication. These vesicles are derived from the endoplasmic reticulum.</text>
</comment>
<comment type="subcellular location">
    <molecule>Protein 2C</molecule>
    <subcellularLocation>
        <location evidence="13">Host cytoplasmic vesicle membrane</location>
        <topology evidence="13">Peripheral membrane protein</topology>
        <orientation evidence="13">Cytoplasmic side</orientation>
    </subcellularLocation>
    <text>Probably localizes to the surface of intracellular membrane vesicles that are induced after virus infection as the site for viral RNA replication. These vesicles are derived from the endoplasmic reticulum.</text>
</comment>
<comment type="subcellular location">
    <molecule>Protein 3A</molecule>
    <subcellularLocation>
        <location evidence="13">Host cytoplasmic vesicle membrane</location>
        <topology evidence="13">Peripheral membrane protein</topology>
        <orientation evidence="13">Cytoplasmic side</orientation>
    </subcellularLocation>
    <text>Probably localizes to the surface of intracellular membrane vesicles that are induced after virus infection as the site for viral RNA replication. These vesicles are derived from the endoplasmic reticulum.</text>
</comment>
<comment type="subcellular location">
    <molecule>Protein 3AB</molecule>
    <subcellularLocation>
        <location evidence="13">Host cytoplasmic vesicle membrane</location>
        <topology evidence="13">Peripheral membrane protein</topology>
        <orientation evidence="13">Cytoplasmic side</orientation>
    </subcellularLocation>
    <text>Probably localizes to the surface of intracellular membrane vesicles that are induced after virus infection as the site for viral RNA replication. These vesicles are derived from the endoplasmic reticulum.</text>
</comment>
<comment type="subcellular location">
    <molecule>Viral protein genome-linked</molecule>
    <subcellularLocation>
        <location evidence="2">Virion</location>
    </subcellularLocation>
    <subcellularLocation>
        <location evidence="7">Host cytoplasm</location>
    </subcellularLocation>
</comment>
<comment type="subcellular location">
    <molecule>Protease 3C</molecule>
    <subcellularLocation>
        <location>Host cytoplasm</location>
    </subcellularLocation>
</comment>
<comment type="subcellular location">
    <molecule>Protein 3CD</molecule>
    <subcellularLocation>
        <location evidence="2">Host nucleus</location>
    </subcellularLocation>
    <subcellularLocation>
        <location evidence="2">Host cytoplasm</location>
    </subcellularLocation>
    <subcellularLocation>
        <location evidence="13">Host cytoplasmic vesicle membrane</location>
        <topology evidence="13">Peripheral membrane protein</topology>
        <orientation evidence="13">Cytoplasmic side</orientation>
    </subcellularLocation>
    <text>Probably localizes to the surface of intracellular membrane vesicles that are induced after virus infection as the site for viral RNA replication. These vesicles are derived from the endoplasmic reticulum.</text>
</comment>
<comment type="subcellular location">
    <molecule>RNA-directed RNA polymerase</molecule>
    <subcellularLocation>
        <location evidence="13">Host cytoplasmic vesicle membrane</location>
        <topology evidence="13">Peripheral membrane protein</topology>
        <orientation evidence="13">Cytoplasmic side</orientation>
    </subcellularLocation>
    <text>Probably localizes to the surface of intracellular membrane vesicles that are induced after virus infection as the site for viral RNA replication. These vesicles are derived from the endoplasmic reticulum.</text>
</comment>
<comment type="domain">
    <molecule>Protein 2C</molecule>
    <text evidence="1 2">The N-terminus has membrane-binding (By similarity). The N-terminus also displays RNA-binding properties (By similarity). The N-terminus is involved in oligomerization (By similarity). The central part contains an ATPase domain and a degenerate C4-type zinc-finger with only 3 cysteines (By similarity). The C-terminus is involved in RNA-binding (By similarity). The extreme C-terminus contains a region involved in oligomerization (By similarity).</text>
</comment>
<comment type="PTM">
    <molecule>Genome polyprotein</molecule>
    <text evidence="2">Specific enzymatic cleavages in vivo by the viral proteases yield processing intermediates and the mature proteins.</text>
</comment>
<comment type="PTM">
    <molecule>Capsid protein VP0</molecule>
    <text evidence="2">Myristoylation is required for the formation of pentamers during virus assembly. Further assembly of 12 pentamers and a molecule of genomic RNA generates the provirion.</text>
</comment>
<comment type="PTM">
    <molecule>Capsid protein VP0</molecule>
    <text evidence="2">During virion maturation, immature virions are rendered infectious following cleavage of VP0 into VP4 and VP2. This maturation seems to be an autocatalytic event triggered by the presence of RNA in the capsid and it is followed by a conformational change infectious virion.</text>
</comment>
<comment type="PTM">
    <molecule>Capsid protein VP4</molecule>
    <text evidence="2">Myristoylation is required during RNA encapsidation and formation of the mature virus particle.</text>
</comment>
<comment type="PTM">
    <molecule>Viral protein genome-linked</molecule>
    <text evidence="2">VPg is uridylylated by the polymerase into VPg-pUpU. This acts as a nucleotide-peptide primer for the genomic RNA replication.</text>
</comment>
<comment type="similarity">
    <text evidence="13">Belongs to the picornaviruses polyprotein family.</text>
</comment>
<keyword id="KW-1072">Activation of host autophagy by virus</keyword>
<keyword id="KW-0067">ATP-binding</keyword>
<keyword id="KW-0068">Autocatalytic cleavage</keyword>
<keyword id="KW-0167">Capsid protein</keyword>
<keyword id="KW-0191">Covalent protein-RNA linkage</keyword>
<keyword id="KW-0235">DNA replication</keyword>
<keyword id="KW-1262">Eukaryotic host gene expression shutoff by virus</keyword>
<keyword id="KW-1193">Eukaryotic host translation shutoff by virus</keyword>
<keyword id="KW-0347">Helicase</keyword>
<keyword id="KW-1035">Host cytoplasm</keyword>
<keyword id="KW-1036">Host cytoplasmic vesicle</keyword>
<keyword id="KW-1190">Host gene expression shutoff by virus</keyword>
<keyword id="KW-1043">Host membrane</keyword>
<keyword id="KW-1192">Host mRNA suppression by virus</keyword>
<keyword id="KW-1048">Host nucleus</keyword>
<keyword id="KW-0945">Host-virus interaction</keyword>
<keyword id="KW-0378">Hydrolase</keyword>
<keyword id="KW-1090">Inhibition of host innate immune response by virus</keyword>
<keyword id="KW-1099">Inhibition of host mRNA nuclear export by virus</keyword>
<keyword id="KW-1088">Inhibition of host RIG-I by virus</keyword>
<keyword id="KW-1113">Inhibition of host RLR pathway by virus</keyword>
<keyword id="KW-0407">Ion channel</keyword>
<keyword id="KW-0406">Ion transport</keyword>
<keyword id="KW-0449">Lipoprotein</keyword>
<keyword id="KW-0460">Magnesium</keyword>
<keyword id="KW-0472">Membrane</keyword>
<keyword id="KW-0479">Metal-binding</keyword>
<keyword id="KW-0519">Myristate</keyword>
<keyword id="KW-0547">Nucleotide-binding</keyword>
<keyword id="KW-0548">Nucleotidyltransferase</keyword>
<keyword id="KW-0597">Phosphoprotein</keyword>
<keyword id="KW-1172">Pore-mediated penetration of viral genome into host cell</keyword>
<keyword id="KW-0645">Protease</keyword>
<keyword id="KW-0677">Repeat</keyword>
<keyword id="KW-0694">RNA-binding</keyword>
<keyword id="KW-0696">RNA-directed RNA polymerase</keyword>
<keyword id="KW-1143">T=pseudo3 icosahedral capsid protein</keyword>
<keyword id="KW-0788">Thiol protease</keyword>
<keyword id="KW-0808">Transferase</keyword>
<keyword id="KW-0813">Transport</keyword>
<keyword id="KW-1161">Viral attachment to host cell</keyword>
<keyword id="KW-0899">Viral immunoevasion</keyword>
<keyword id="KW-1182">Viral ion channel</keyword>
<keyword id="KW-1162">Viral penetration into host cytoplasm</keyword>
<keyword id="KW-0693">Viral RNA replication</keyword>
<keyword id="KW-0946">Virion</keyword>
<keyword id="KW-1164">Virus endocytosis by host</keyword>
<keyword id="KW-1160">Virus entry into host cell</keyword>
<keyword id="KW-0862">Zinc</keyword>
<keyword id="KW-0863">Zinc-finger</keyword>
<evidence type="ECO:0000250" key="1">
    <source>
        <dbReference type="UniProtKB" id="B9VUU3"/>
    </source>
</evidence>
<evidence type="ECO:0000250" key="2">
    <source>
        <dbReference type="UniProtKB" id="P03300"/>
    </source>
</evidence>
<evidence type="ECO:0000250" key="3">
    <source>
        <dbReference type="UniProtKB" id="P03301"/>
    </source>
</evidence>
<evidence type="ECO:0000250" key="4">
    <source>
        <dbReference type="UniProtKB" id="P03303"/>
    </source>
</evidence>
<evidence type="ECO:0000250" key="5">
    <source>
        <dbReference type="UniProtKB" id="P03313"/>
    </source>
</evidence>
<evidence type="ECO:0000250" key="6">
    <source>
        <dbReference type="UniProtKB" id="P04936"/>
    </source>
</evidence>
<evidence type="ECO:0000250" key="7">
    <source>
        <dbReference type="UniProtKB" id="Q66478"/>
    </source>
</evidence>
<evidence type="ECO:0000250" key="8">
    <source>
        <dbReference type="UniProtKB" id="Q9QF31"/>
    </source>
</evidence>
<evidence type="ECO:0000255" key="9"/>
<evidence type="ECO:0000255" key="10">
    <source>
        <dbReference type="PROSITE-ProRule" id="PRU00539"/>
    </source>
</evidence>
<evidence type="ECO:0000255" key="11">
    <source>
        <dbReference type="PROSITE-ProRule" id="PRU00551"/>
    </source>
</evidence>
<evidence type="ECO:0000255" key="12">
    <source>
        <dbReference type="PROSITE-ProRule" id="PRU01222"/>
    </source>
</evidence>
<evidence type="ECO:0000305" key="13"/>
<name>POLG_EC09B</name>
<protein>
    <recommendedName>
        <fullName>Genome polyprotein</fullName>
    </recommendedName>
    <component>
        <recommendedName>
            <fullName>P1</fullName>
        </recommendedName>
    </component>
    <component>
        <recommendedName>
            <fullName>Capsid protein VP0</fullName>
        </recommendedName>
        <alternativeName>
            <fullName>VP4-VP2</fullName>
        </alternativeName>
    </component>
    <component>
        <recommendedName>
            <fullName>Capsid protein VP4</fullName>
        </recommendedName>
        <alternativeName>
            <fullName>P1A</fullName>
        </alternativeName>
        <alternativeName>
            <fullName>Virion protein 4</fullName>
        </alternativeName>
    </component>
    <component>
        <recommendedName>
            <fullName>Capsid protein VP2</fullName>
        </recommendedName>
        <alternativeName>
            <fullName>P1B</fullName>
        </alternativeName>
        <alternativeName>
            <fullName>Virion protein 2</fullName>
        </alternativeName>
    </component>
    <component>
        <recommendedName>
            <fullName>Capsid protein VP3</fullName>
        </recommendedName>
        <alternativeName>
            <fullName>P1C</fullName>
        </alternativeName>
        <alternativeName>
            <fullName>Virion protein 3</fullName>
        </alternativeName>
    </component>
    <component>
        <recommendedName>
            <fullName>Capsid protein VP1</fullName>
        </recommendedName>
        <alternativeName>
            <fullName>P1D</fullName>
        </alternativeName>
        <alternativeName>
            <fullName>Virion protein 1</fullName>
        </alternativeName>
    </component>
    <component>
        <recommendedName>
            <fullName>P2</fullName>
        </recommendedName>
    </component>
    <component>
        <recommendedName>
            <fullName>Protease 2A</fullName>
            <shortName>P2A</shortName>
            <ecNumber evidence="2">3.4.22.29</ecNumber>
        </recommendedName>
        <alternativeName>
            <fullName>Picornain 2A</fullName>
        </alternativeName>
        <alternativeName>
            <fullName>Protein 2A</fullName>
        </alternativeName>
    </component>
    <component>
        <recommendedName>
            <fullName>Protein 2B</fullName>
            <shortName>P2B</shortName>
        </recommendedName>
    </component>
    <component>
        <recommendedName>
            <fullName>Protein 2C</fullName>
            <shortName>P2C</shortName>
            <ecNumber evidence="2">3.6.1.15</ecNumber>
        </recommendedName>
    </component>
    <component>
        <recommendedName>
            <fullName>P3</fullName>
        </recommendedName>
    </component>
    <component>
        <recommendedName>
            <fullName>Protein 3AB</fullName>
        </recommendedName>
    </component>
    <component>
        <recommendedName>
            <fullName>Protein 3A</fullName>
            <shortName>P3A</shortName>
        </recommendedName>
    </component>
    <component>
        <recommendedName>
            <fullName>Viral protein genome-linked</fullName>
            <shortName>VPg</shortName>
        </recommendedName>
        <alternativeName>
            <fullName>Protein 3B</fullName>
            <shortName>P3B</shortName>
        </alternativeName>
    </component>
    <component>
        <recommendedName>
            <fullName>Protein 3CD</fullName>
            <ecNumber>3.4.22.28</ecNumber>
        </recommendedName>
    </component>
    <component>
        <recommendedName>
            <fullName evidence="12">Protease 3C</fullName>
            <ecNumber evidence="12">3.4.22.28</ecNumber>
        </recommendedName>
        <alternativeName>
            <fullName evidence="12">Picornain 3C</fullName>
            <shortName evidence="12">P3C</shortName>
        </alternativeName>
    </component>
    <component>
        <recommendedName>
            <fullName evidence="10">RNA-directed RNA polymerase</fullName>
            <shortName>RdRp</shortName>
            <ecNumber evidence="10">2.7.7.48</ecNumber>
        </recommendedName>
        <alternativeName>
            <fullName>3D polymerase</fullName>
            <shortName>3Dpol</shortName>
        </alternativeName>
        <alternativeName>
            <fullName>Protein 3D</fullName>
            <shortName>3D</shortName>
        </alternativeName>
    </component>
</protein>
<feature type="initiator methionine" description="Removed; by host" evidence="2">
    <location>
        <position position="1"/>
    </location>
</feature>
<feature type="chain" id="PRO_0000426401" description="Genome polyprotein">
    <location>
        <begin position="2"/>
        <end position="2203"/>
    </location>
</feature>
<feature type="chain" id="PRO_0000426402" description="P1">
    <location>
        <begin position="2"/>
        <end position="869"/>
    </location>
</feature>
<feature type="chain" id="PRO_0000426403" description="Capsid protein VP0">
    <location>
        <begin position="2"/>
        <end position="330"/>
    </location>
</feature>
<feature type="chain" id="PRO_0000426404" description="Capsid protein VP4">
    <location>
        <begin position="2"/>
        <end position="69"/>
    </location>
</feature>
<feature type="chain" id="PRO_0000426405" description="Capsid protein VP2">
    <location>
        <begin position="70"/>
        <end position="330"/>
    </location>
</feature>
<feature type="chain" id="PRO_0000426406" description="Capsid protein VP3">
    <location>
        <begin position="331"/>
        <end position="569"/>
    </location>
</feature>
<feature type="chain" id="PRO_0000426407" description="Capsid protein VP1">
    <location>
        <begin position="570"/>
        <end position="869"/>
    </location>
</feature>
<feature type="chain" id="PRO_0000426408" description="P2">
    <location>
        <begin position="870"/>
        <end position="1447"/>
    </location>
</feature>
<feature type="chain" id="PRO_0000426409" description="Protease 2A">
    <location>
        <begin position="870"/>
        <end position="1019"/>
    </location>
</feature>
<feature type="chain" id="PRO_0000039686" description="Protein 2B">
    <location>
        <begin position="1020"/>
        <end position="1118"/>
    </location>
</feature>
<feature type="chain" id="PRO_0000039687" description="Protein 2C">
    <location>
        <begin position="1119"/>
        <end position="1447"/>
    </location>
</feature>
<feature type="chain" id="PRO_0000426410" description="P3">
    <location>
        <begin position="1448"/>
        <end position="2203"/>
    </location>
</feature>
<feature type="chain" id="PRO_0000426411" description="Protein 3AB">
    <location>
        <begin position="1448"/>
        <end position="1558"/>
    </location>
</feature>
<feature type="chain" id="PRO_0000039688" description="Protein 3A">
    <location>
        <begin position="1448"/>
        <end position="1536"/>
    </location>
</feature>
<feature type="chain" id="PRO_0000426412" description="Viral protein genome-linked">
    <location>
        <begin position="1537"/>
        <end position="1558"/>
    </location>
</feature>
<feature type="chain" id="PRO_0000426413" description="Protein 3CD">
    <location>
        <begin position="1559"/>
        <end position="2203"/>
    </location>
</feature>
<feature type="chain" id="PRO_0000426414" description="Protease 3C">
    <location>
        <begin position="1559"/>
        <end position="1741"/>
    </location>
</feature>
<feature type="chain" id="PRO_0000426415" description="RNA-directed RNA polymerase">
    <location>
        <begin position="1742"/>
        <end position="2203"/>
    </location>
</feature>
<feature type="topological domain" description="Cytoplasmic" evidence="9">
    <location>
        <begin position="2"/>
        <end position="1513"/>
    </location>
</feature>
<feature type="intramembrane region" evidence="9">
    <location>
        <begin position="1514"/>
        <end position="1529"/>
    </location>
</feature>
<feature type="topological domain" description="Cytoplasmic" evidence="9">
    <location>
        <begin position="1530"/>
        <end position="2203"/>
    </location>
</feature>
<feature type="domain" description="SF3 helicase" evidence="11">
    <location>
        <begin position="1223"/>
        <end position="1379"/>
    </location>
</feature>
<feature type="domain" description="Peptidase C3" evidence="12">
    <location>
        <begin position="1559"/>
        <end position="1737"/>
    </location>
</feature>
<feature type="domain" description="RdRp catalytic" evidence="10">
    <location>
        <begin position="1968"/>
        <end position="2084"/>
    </location>
</feature>
<feature type="zinc finger region" description="C4-type; degenerate" evidence="1">
    <location>
        <begin position="1387"/>
        <end position="1404"/>
    </location>
</feature>
<feature type="region of interest" description="Amphipathic alpha-helix" evidence="9">
    <location>
        <begin position="567"/>
        <end position="583"/>
    </location>
</feature>
<feature type="region of interest" description="Oligomerization" evidence="2">
    <location>
        <begin position="1119"/>
        <end position="1257"/>
    </location>
</feature>
<feature type="region of interest" description="Membrane-binding" evidence="2">
    <location>
        <begin position="1119"/>
        <end position="1191"/>
    </location>
</feature>
<feature type="region of interest" description="RNA-binding" evidence="2">
    <location>
        <begin position="1140"/>
        <end position="1144"/>
    </location>
</feature>
<feature type="region of interest" description="RNA-binding" evidence="2">
    <location>
        <begin position="1431"/>
        <end position="1438"/>
    </location>
</feature>
<feature type="region of interest" description="Oligomerization" evidence="2">
    <location>
        <begin position="1442"/>
        <end position="1447"/>
    </location>
</feature>
<feature type="active site" description="For protease 2A activity" evidence="2">
    <location>
        <position position="890"/>
    </location>
</feature>
<feature type="active site" description="For protease 2A activity" evidence="2">
    <location>
        <position position="908"/>
    </location>
</feature>
<feature type="active site" description="For protease 2A activity" evidence="2">
    <location>
        <position position="979"/>
    </location>
</feature>
<feature type="active site" description="For protease 3C activity" evidence="12">
    <location>
        <position position="1598"/>
    </location>
</feature>
<feature type="active site" description="For protease 3C activity" evidence="12">
    <location>
        <position position="1629"/>
    </location>
</feature>
<feature type="active site" description="For protease 3C activity" evidence="12">
    <location>
        <position position="1705"/>
    </location>
</feature>
<feature type="binding site" evidence="8">
    <location>
        <position position="925"/>
    </location>
    <ligand>
        <name>Zn(2+)</name>
        <dbReference type="ChEBI" id="CHEBI:29105"/>
        <label>1</label>
        <note>structural</note>
    </ligand>
</feature>
<feature type="binding site" evidence="8">
    <location>
        <position position="927"/>
    </location>
    <ligand>
        <name>Zn(2+)</name>
        <dbReference type="ChEBI" id="CHEBI:29105"/>
        <label>1</label>
        <note>structural</note>
    </ligand>
</feature>
<feature type="binding site" evidence="8">
    <location>
        <position position="985"/>
    </location>
    <ligand>
        <name>Zn(2+)</name>
        <dbReference type="ChEBI" id="CHEBI:29105"/>
        <label>1</label>
        <note>structural</note>
    </ligand>
</feature>
<feature type="binding site" evidence="8">
    <location>
        <position position="987"/>
    </location>
    <ligand>
        <name>Zn(2+)</name>
        <dbReference type="ChEBI" id="CHEBI:29105"/>
        <label>1</label>
        <note>structural</note>
    </ligand>
</feature>
<feature type="binding site" evidence="1">
    <location>
        <position position="1387"/>
    </location>
    <ligand>
        <name>Zn(2+)</name>
        <dbReference type="ChEBI" id="CHEBI:29105"/>
        <label>2</label>
    </ligand>
</feature>
<feature type="binding site" evidence="1">
    <location>
        <position position="1399"/>
    </location>
    <ligand>
        <name>Zn(2+)</name>
        <dbReference type="ChEBI" id="CHEBI:29105"/>
        <label>2</label>
    </ligand>
</feature>
<feature type="binding site" evidence="1">
    <location>
        <position position="1404"/>
    </location>
    <ligand>
        <name>Zn(2+)</name>
        <dbReference type="ChEBI" id="CHEBI:29105"/>
        <label>2</label>
    </ligand>
</feature>
<feature type="binding site" evidence="2">
    <location>
        <position position="1974"/>
    </location>
    <ligand>
        <name>Mg(2+)</name>
        <dbReference type="ChEBI" id="CHEBI:18420"/>
        <label>1</label>
        <note>catalytic; for RdRp activity</note>
    </ligand>
</feature>
<feature type="binding site" evidence="2">
    <location>
        <position position="1974"/>
    </location>
    <ligand>
        <name>Mg(2+)</name>
        <dbReference type="ChEBI" id="CHEBI:18420"/>
        <label>2</label>
        <note>catalytic; for RdRp activity</note>
    </ligand>
</feature>
<feature type="binding site" evidence="2">
    <location>
        <position position="2070"/>
    </location>
    <ligand>
        <name>Mg(2+)</name>
        <dbReference type="ChEBI" id="CHEBI:18420"/>
        <label>1</label>
        <note>catalytic; for RdRp activity</note>
    </ligand>
</feature>
<feature type="binding site" evidence="2">
    <location>
        <position position="2070"/>
    </location>
    <ligand>
        <name>Mg(2+)</name>
        <dbReference type="ChEBI" id="CHEBI:18420"/>
        <label>2</label>
        <note>catalytic; for RdRp activity</note>
    </ligand>
</feature>
<feature type="site" description="Cleavage; by autolysis" evidence="2">
    <location>
        <begin position="69"/>
        <end position="70"/>
    </location>
</feature>
<feature type="site" description="Cleavage; by protease 3C" evidence="3">
    <location>
        <begin position="330"/>
        <end position="331"/>
    </location>
</feature>
<feature type="site" description="Cleavage; by autolysis" evidence="3">
    <location>
        <begin position="869"/>
        <end position="870"/>
    </location>
</feature>
<feature type="site" description="Cleavage; by protease 3C" evidence="3">
    <location>
        <begin position="1019"/>
        <end position="1020"/>
    </location>
</feature>
<feature type="site" description="Cleavage; by protease 3C" evidence="3">
    <location>
        <begin position="1118"/>
        <end position="1119"/>
    </location>
</feature>
<feature type="site" description="Involved in the interaction with host RTN3" evidence="7">
    <location>
        <position position="1143"/>
    </location>
</feature>
<feature type="site" description="Cleavage; by protease 3C" evidence="3">
    <location>
        <begin position="1447"/>
        <end position="1448"/>
    </location>
</feature>
<feature type="site" description="Cleavage; by protease 3C" evidence="3">
    <location>
        <begin position="1536"/>
        <end position="1537"/>
    </location>
</feature>
<feature type="site" description="Cleavage; by protease 3C" evidence="3">
    <location>
        <begin position="1558"/>
        <end position="1559"/>
    </location>
</feature>
<feature type="site" description="Cleavage; by protease 3C" evidence="3">
    <location>
        <begin position="1741"/>
        <end position="1742"/>
    </location>
</feature>
<feature type="modified residue" description="O-(5'-phospho-RNA)-tyrosine" evidence="2">
    <location>
        <position position="1539"/>
    </location>
</feature>
<feature type="lipid moiety-binding region" description="N-myristoyl glycine; by host" evidence="2">
    <location>
        <position position="2"/>
    </location>
</feature>
<sequence>MGAQVSTQKTGAHETGLNASGNSIIHYTNINYYKDSASNSANRQDFTQDPSKFTEPVKDVMIKTLPALNSPSAEECGFSDRVRSITIGNSTITTQECANVVVAYGRWPAYLRDDEATAEDQPTQPDVATCRFYTLESVQWQENSAGWWWKFPDALSNMGLFGQNMLYHYLGRSGYTIHVQCNASKFHQGRPIVVCVPEAEMGCSKVDGVVNAQGLSKGETPIEFERTSTTAEVGVVQKAVYNAGMGVGVGNLTIFPHQWINLRRNNSATIVIPYINCVPMDNMFRHNNFTLMVILFAPLKSSGGTNYVSITITVAPMDAEYNGLRLAGHQGLPTMNTPGSTQFLTSDDFQSPCAMPEFDVTPCMDIPGEVHNLMEIAEVDSVVPVNNTSTHMEGTDAFQIKVTAGNVQDKSAIFSFQLNPGNSTVLRRTLLGEILNYYAHWSGSIKLTFLFCGSAMATGKLLLAYSHAGASVPKSRRDAMLGTHVIWDVGLQSSCVLCVPWISQTHYRLVAQDEYTSAGYITCWYQTNIVVPPETPSDCVVLCFVSACNDFSVRMLKDTPFIEQAAELQNDVRQAVEGAIGRVADTIRSGPSNSEAVPALTAAETGHTSQVVPSDTMQTRHVKNYHSRSESTIENFLCRSACVRMAKYEARGDPESTDRFDAWEISVRDMVQMRRKCEMFTYLRFDVEVTFVITSYQHQGSINQDMPPMTHQIMYIPPGGPFPKKVDGYEWQTSTNPSIFWTEGNAPPRMSIPFISIGNAYSSFYDGWSHFDSKGAYGFNTLNKMGHIYCRHVNKETPAEVTSYIRIYFKPKHIRAWVPRPPRLCQYKNKANVNFEATAFTETRDTINTVPVSNHGSGRRGDLAALSTHGAFGQESGAVYVGNYRVLNRHLATHTDWQNCIWEDYNRDLLVSTTTAHGCDTIARCQCKTGVFFCQSKNKHYPVSFEGPGLVEVQESEYYPKRYQSHVLLAAGFSEPGDCGGILRCDHGVIGLVTMGGEGVVGFADVRDLLWLEDDAMEQGVKDYVEQLGNAFGSGFTNQICEQVNLLKESLIGQDSVLEKSLKALVKIISALVIVVRNQDDLITVTATLALIGCTTSPWRWLKQKVSQYYGIPMAERQSNGWLKKFTEMTNACKGMEWIAVKIQKFIEWLKVKNLPEVKEKHEFLNRLKQLPLLESQIATIEQSAPSQSDQEQLFSNVQYFAHYCRKYAPLYAAEAKRVFSLEKKMSNYIQFKSKCRIEPVCLLLHGSPGAGKSVATNLIGRSLAEKLNSSVYSLPPDPDHFDGYKQQAVVIMDDLCQNPDGKDVSLFCQMVSSVDFVPPMAALEEKGILFTSPFVLASTNAGSINAPTVSDSRALARRFHFDMNIEVISMYSQNGKINMPMSVKTCDEECCPVNFKRCCPLVCGKAIQFIDRRTQVRYSLDMLVTEMFREYNHRHSVGATLEALFQGPPVYREIKISVAPETPPPPAIADLLKSVDSEAVREYCKERGWLVPEINSTLQIEKHVSRAFICLQALTTFVSVAGIIYIIYKLFAGFQGAYTGMPNKKPKVPTLRQAKVQGPAFEFAVAMMKRNASTVKTEYGEFTMLGIYDRWAVLPRHAKPGSTILMNDQEVCLLDAKELVDKDGINLELTLLKLNRNEKFRDIRGFLAREEVEVNEAVLAINTSKFPNMYIPVGQVTDYGFLNLGGTPTKRMLMYNFPTRAGQCGGVLMSTGKVLGIHVGGNGHQGFSAALLRHYFNEEQGEIEFIESSKDAGFPVINTPSKTKLEPSVFHQVFEGNKEPAVLRNGDPRLKADFEEAIFSKYIGNVNTHVDEYMQEAVDHYAGQLATLDISTEPMKLEDAVYGTEGLEALDLTTSAGYPYVALGIKKRDILSKRTKDLTKLKECMDKYGLNLPMVTYVKDELRSAEKSPRGKSRLIEASSLNDSVAMRQTFGNLYKVFHLNPGIVTGSAVGCDPDVFWSKIPVMLDGHLIAFDYSGYDASLSPVWFACLKLLLEKLGYSSKETNYIDYLCNSHHLYRDKHYFVRGGMPSGCSGTSIFNSMINNIIIRTLMLKVYKGIDLDQFRMIAYGDDVIASYPWPIDASLLAEAGKDYGLIMTPADKGECFNEVTWTNVTFLKRYFRADEQYPFLVHPVMPMKDIHESIRWTKDPKNTQDHVRSLCLLAWHNGEHEYEEFIHKIRSVPVGRCLTLPAFSTLRRKWLDSF</sequence>
<accession>Q66577</accession>
<organismHost>
    <name type="scientific">Homo sapiens</name>
    <name type="common">Human</name>
    <dbReference type="NCBI Taxonomy" id="9606"/>
</organismHost>
<proteinExistence type="inferred from homology"/>